<evidence type="ECO:0000250" key="1"/>
<evidence type="ECO:0000305" key="2"/>
<gene>
    <name type="primary">clpB</name>
    <name type="ordered locus">MG355</name>
</gene>
<accession>P47597</accession>
<sequence length="714" mass="81039">MNINFTPAGENRNFLQEIGRNINDEVLKNKVDPIIGRDNEIRRLIEILSRKSKNNPVLIGEPGVGKTAIVEGFVRRVVSNDVPLNLRDVEIYELSLSGLIAGTKFQGEFEKRINTILKQVKESNGRIILFIDEIHQIVGLGRNSSSGAMDIANILKPMLARGEIKVIGATTLKEYREYIEKDGALERRFQKILINEPSSQEALTIMRGLKTRWELFHNITIFDSALVAAVEMSTRYINERNLPDKAIDLIDEAAAKIKTEMSSEPVAIDSLKREIINLETEYAALKQDKENDNKQSKKEYLEKLKKQLDALKQKRDSLINEWKKEKADFENINKLKKEIEEFQTKLETYQSEGNYESASKILYSDIPRLKKELESAQQKYATSKHDLFKTEVSENEIAEVISQTTGIPLKKLLESEKDKLLHLGDEIKKRVKGQDEAIDAVVNTVIRGRVNINDPNKPIGSFIFLGSTGVGKTELAKSLAEVLFDNEKALIRFDMSEYMEKHSVAKLIGAPPGYIGYEQSGLLTEAVRRKPYSVLLFDEIEKAHPDVTNVLLQVLDDGTLKDSQGRVVNFKNTLIIMTSNLGSNFLLEGKKDLAIQSLKKHFRPEFINRIDEIVFFNVLEKDTVLSIINSLLAQLSKRLNKQNLFFNFDSNLTEFIYKSSFDQQFGARPIKRFIDHSVATLIAKYILQGKIKKGVGYNIAVVKDNITITQNNKS</sequence>
<organism>
    <name type="scientific">Mycoplasma genitalium (strain ATCC 33530 / DSM 19775 / NCTC 10195 / G37)</name>
    <name type="common">Mycoplasmoides genitalium</name>
    <dbReference type="NCBI Taxonomy" id="243273"/>
    <lineage>
        <taxon>Bacteria</taxon>
        <taxon>Bacillati</taxon>
        <taxon>Mycoplasmatota</taxon>
        <taxon>Mycoplasmoidales</taxon>
        <taxon>Mycoplasmoidaceae</taxon>
        <taxon>Mycoplasmoides</taxon>
    </lineage>
</organism>
<feature type="chain" id="PRO_0000191141" description="Chaperone protein ClpB">
    <location>
        <begin position="1"/>
        <end position="714"/>
    </location>
</feature>
<feature type="region of interest" description="NBD1" evidence="1">
    <location>
        <begin position="13"/>
        <end position="196"/>
    </location>
</feature>
<feature type="region of interest" description="Linker" evidence="1">
    <location>
        <begin position="197"/>
        <end position="406"/>
    </location>
</feature>
<feature type="region of interest" description="NBD2" evidence="1">
    <location>
        <begin position="416"/>
        <end position="618"/>
    </location>
</feature>
<feature type="region of interest" description="C-terminal" evidence="1">
    <location>
        <begin position="619"/>
        <end position="714"/>
    </location>
</feature>
<feature type="coiled-coil region" evidence="1">
    <location>
        <begin position="247"/>
        <end position="385"/>
    </location>
</feature>
<feature type="binding site" evidence="1">
    <location>
        <begin position="60"/>
        <end position="67"/>
    </location>
    <ligand>
        <name>ATP</name>
        <dbReference type="ChEBI" id="CHEBI:30616"/>
        <label>1</label>
    </ligand>
</feature>
<feature type="binding site" evidence="1">
    <location>
        <begin position="466"/>
        <end position="473"/>
    </location>
    <ligand>
        <name>ATP</name>
        <dbReference type="ChEBI" id="CHEBI:30616"/>
        <label>2</label>
    </ligand>
</feature>
<dbReference type="EMBL" id="L43967">
    <property type="protein sequence ID" value="AAC71580.1"/>
    <property type="molecule type" value="Genomic_DNA"/>
</dbReference>
<dbReference type="PIR" id="C64239">
    <property type="entry name" value="C64239"/>
</dbReference>
<dbReference type="RefSeq" id="WP_010869446.1">
    <property type="nucleotide sequence ID" value="NC_000908.2"/>
</dbReference>
<dbReference type="SMR" id="P47597"/>
<dbReference type="FunCoup" id="P47597">
    <property type="interactions" value="186"/>
</dbReference>
<dbReference type="STRING" id="243273.MG_355"/>
<dbReference type="GeneID" id="88282536"/>
<dbReference type="KEGG" id="mge:MG_355"/>
<dbReference type="eggNOG" id="COG0542">
    <property type="taxonomic scope" value="Bacteria"/>
</dbReference>
<dbReference type="HOGENOM" id="CLU_005070_4_0_14"/>
<dbReference type="InParanoid" id="P47597"/>
<dbReference type="OrthoDB" id="9803641at2"/>
<dbReference type="BioCyc" id="MGEN243273:G1GJ2-446-MONOMER"/>
<dbReference type="Proteomes" id="UP000000807">
    <property type="component" value="Chromosome"/>
</dbReference>
<dbReference type="GO" id="GO:0005737">
    <property type="term" value="C:cytoplasm"/>
    <property type="evidence" value="ECO:0000318"/>
    <property type="project" value="GO_Central"/>
</dbReference>
<dbReference type="GO" id="GO:0005524">
    <property type="term" value="F:ATP binding"/>
    <property type="evidence" value="ECO:0007669"/>
    <property type="project" value="UniProtKB-KW"/>
</dbReference>
<dbReference type="GO" id="GO:0016887">
    <property type="term" value="F:ATP hydrolysis activity"/>
    <property type="evidence" value="ECO:0000318"/>
    <property type="project" value="GO_Central"/>
</dbReference>
<dbReference type="GO" id="GO:0034605">
    <property type="term" value="P:cellular response to heat"/>
    <property type="evidence" value="ECO:0000318"/>
    <property type="project" value="GO_Central"/>
</dbReference>
<dbReference type="CDD" id="cd00009">
    <property type="entry name" value="AAA"/>
    <property type="match status" value="1"/>
</dbReference>
<dbReference type="CDD" id="cd19499">
    <property type="entry name" value="RecA-like_ClpB_Hsp104-like"/>
    <property type="match status" value="1"/>
</dbReference>
<dbReference type="FunFam" id="3.40.50.300:FF:000120">
    <property type="entry name" value="ATP-dependent chaperone ClpB"/>
    <property type="match status" value="1"/>
</dbReference>
<dbReference type="FunFam" id="3.40.50.300:FF:000025">
    <property type="entry name" value="ATP-dependent Clp protease subunit"/>
    <property type="match status" value="1"/>
</dbReference>
<dbReference type="Gene3D" id="1.10.8.60">
    <property type="match status" value="1"/>
</dbReference>
<dbReference type="Gene3D" id="3.40.50.300">
    <property type="entry name" value="P-loop containing nucleotide triphosphate hydrolases"/>
    <property type="match status" value="3"/>
</dbReference>
<dbReference type="InterPro" id="IPR003593">
    <property type="entry name" value="AAA+_ATPase"/>
</dbReference>
<dbReference type="InterPro" id="IPR003959">
    <property type="entry name" value="ATPase_AAA_core"/>
</dbReference>
<dbReference type="InterPro" id="IPR019489">
    <property type="entry name" value="Clp_ATPase_C"/>
</dbReference>
<dbReference type="InterPro" id="IPR001270">
    <property type="entry name" value="ClpA/B"/>
</dbReference>
<dbReference type="InterPro" id="IPR018368">
    <property type="entry name" value="ClpA/B_CS1"/>
</dbReference>
<dbReference type="InterPro" id="IPR028299">
    <property type="entry name" value="ClpA/B_CS2"/>
</dbReference>
<dbReference type="InterPro" id="IPR041546">
    <property type="entry name" value="ClpA/ClpB_AAA_lid"/>
</dbReference>
<dbReference type="InterPro" id="IPR050130">
    <property type="entry name" value="ClpA_ClpB"/>
</dbReference>
<dbReference type="InterPro" id="IPR027417">
    <property type="entry name" value="P-loop_NTPase"/>
</dbReference>
<dbReference type="PANTHER" id="PTHR11638">
    <property type="entry name" value="ATP-DEPENDENT CLP PROTEASE"/>
    <property type="match status" value="1"/>
</dbReference>
<dbReference type="PANTHER" id="PTHR11638:SF18">
    <property type="entry name" value="HEAT SHOCK PROTEIN 104"/>
    <property type="match status" value="1"/>
</dbReference>
<dbReference type="Pfam" id="PF00004">
    <property type="entry name" value="AAA"/>
    <property type="match status" value="1"/>
</dbReference>
<dbReference type="Pfam" id="PF07724">
    <property type="entry name" value="AAA_2"/>
    <property type="match status" value="1"/>
</dbReference>
<dbReference type="Pfam" id="PF17871">
    <property type="entry name" value="AAA_lid_9"/>
    <property type="match status" value="1"/>
</dbReference>
<dbReference type="Pfam" id="PF10431">
    <property type="entry name" value="ClpB_D2-small"/>
    <property type="match status" value="1"/>
</dbReference>
<dbReference type="PRINTS" id="PR00300">
    <property type="entry name" value="CLPPROTEASEA"/>
</dbReference>
<dbReference type="SMART" id="SM00382">
    <property type="entry name" value="AAA"/>
    <property type="match status" value="2"/>
</dbReference>
<dbReference type="SMART" id="SM01086">
    <property type="entry name" value="ClpB_D2-small"/>
    <property type="match status" value="1"/>
</dbReference>
<dbReference type="SUPFAM" id="SSF52540">
    <property type="entry name" value="P-loop containing nucleoside triphosphate hydrolases"/>
    <property type="match status" value="2"/>
</dbReference>
<dbReference type="PROSITE" id="PS00870">
    <property type="entry name" value="CLPAB_1"/>
    <property type="match status" value="1"/>
</dbReference>
<dbReference type="PROSITE" id="PS00871">
    <property type="entry name" value="CLPAB_2"/>
    <property type="match status" value="1"/>
</dbReference>
<comment type="function">
    <text evidence="1">Part of a stress-induced multi-chaperone system, it is involved in the recovery of the cell from heat-induced damage, in cooperation with DnaK, DnaJ and GrpE. Acts before DnaK, in the processing of protein aggregates. Protein binding stimulates the ATPase activity; ATP hydrolysis unfolds the denatured protein aggregates, which probably helps expose new hydrophobic binding sites on the surface of ClpB-bound aggregates, contributing to the solubilization and refolding of denatured protein aggregates by DnaK (By similarity).</text>
</comment>
<comment type="subunit">
    <text evidence="1">Homohexamer. The oligomerization is ATP-dependent (By similarity).</text>
</comment>
<comment type="subcellular location">
    <subcellularLocation>
        <location evidence="2">Cytoplasm</location>
    </subcellularLocation>
</comment>
<comment type="domain">
    <text evidence="1">The N-terminal domain probably functions as a substrate-discriminating domain, recruiting aggregated proteins to the ClpB hexamer and/or stabilizing bound proteins. The NBD2 domain is responsible for oligomerization, whereas the NBD1 domain stabilizes the hexamer probably in an ATP-dependent manner. The movement of the coiled-coil domain is essential for ClpB ability to rescue proteins from an aggregated state, probably by pulling apart large aggregated proteins, which are bound between the coiled-coils motifs of adjacent ClpB subunits in the functional hexamer (By similarity).</text>
</comment>
<comment type="similarity">
    <text evidence="2">Belongs to the ClpA/ClpB family.</text>
</comment>
<proteinExistence type="inferred from homology"/>
<reference key="1">
    <citation type="journal article" date="1995" name="Science">
        <title>The minimal gene complement of Mycoplasma genitalium.</title>
        <authorList>
            <person name="Fraser C.M."/>
            <person name="Gocayne J.D."/>
            <person name="White O."/>
            <person name="Adams M.D."/>
            <person name="Clayton R.A."/>
            <person name="Fleischmann R.D."/>
            <person name="Bult C.J."/>
            <person name="Kerlavage A.R."/>
            <person name="Sutton G.G."/>
            <person name="Kelley J.M."/>
            <person name="Fritchman J.L."/>
            <person name="Weidman J.F."/>
            <person name="Small K.V."/>
            <person name="Sandusky M."/>
            <person name="Fuhrmann J.L."/>
            <person name="Nguyen D.T."/>
            <person name="Utterback T.R."/>
            <person name="Saudek D.M."/>
            <person name="Phillips C.A."/>
            <person name="Merrick J.M."/>
            <person name="Tomb J.-F."/>
            <person name="Dougherty B.A."/>
            <person name="Bott K.F."/>
            <person name="Hu P.-C."/>
            <person name="Lucier T.S."/>
            <person name="Peterson S.N."/>
            <person name="Smith H.O."/>
            <person name="Hutchison C.A. III"/>
            <person name="Venter J.C."/>
        </authorList>
    </citation>
    <scope>NUCLEOTIDE SEQUENCE [LARGE SCALE GENOMIC DNA]</scope>
    <source>
        <strain>ATCC 33530 / DSM 19775 / NCTC 10195 / G37</strain>
    </source>
</reference>
<keyword id="KW-0067">ATP-binding</keyword>
<keyword id="KW-0143">Chaperone</keyword>
<keyword id="KW-0175">Coiled coil</keyword>
<keyword id="KW-0963">Cytoplasm</keyword>
<keyword id="KW-0547">Nucleotide-binding</keyword>
<keyword id="KW-1185">Reference proteome</keyword>
<keyword id="KW-0677">Repeat</keyword>
<keyword id="KW-0346">Stress response</keyword>
<name>CLPB_MYCGE</name>
<protein>
    <recommendedName>
        <fullName>Chaperone protein ClpB</fullName>
    </recommendedName>
</protein>